<evidence type="ECO:0000255" key="1">
    <source>
        <dbReference type="HAMAP-Rule" id="MF_00107"/>
    </source>
</evidence>
<gene>
    <name evidence="1" type="primary">ispF</name>
    <name type="ordered locus">SBO_2774</name>
</gene>
<proteinExistence type="inferred from homology"/>
<reference key="1">
    <citation type="journal article" date="2005" name="Nucleic Acids Res.">
        <title>Genome dynamics and diversity of Shigella species, the etiologic agents of bacillary dysentery.</title>
        <authorList>
            <person name="Yang F."/>
            <person name="Yang J."/>
            <person name="Zhang X."/>
            <person name="Chen L."/>
            <person name="Jiang Y."/>
            <person name="Yan Y."/>
            <person name="Tang X."/>
            <person name="Wang J."/>
            <person name="Xiong Z."/>
            <person name="Dong J."/>
            <person name="Xue Y."/>
            <person name="Zhu Y."/>
            <person name="Xu X."/>
            <person name="Sun L."/>
            <person name="Chen S."/>
            <person name="Nie H."/>
            <person name="Peng J."/>
            <person name="Xu J."/>
            <person name="Wang Y."/>
            <person name="Yuan Z."/>
            <person name="Wen Y."/>
            <person name="Yao Z."/>
            <person name="Shen Y."/>
            <person name="Qiang B."/>
            <person name="Hou Y."/>
            <person name="Yu J."/>
            <person name="Jin Q."/>
        </authorList>
    </citation>
    <scope>NUCLEOTIDE SEQUENCE [LARGE SCALE GENOMIC DNA]</scope>
    <source>
        <strain>Sb227</strain>
    </source>
</reference>
<keyword id="KW-0414">Isoprene biosynthesis</keyword>
<keyword id="KW-0456">Lyase</keyword>
<keyword id="KW-0479">Metal-binding</keyword>
<name>ISPF_SHIBS</name>
<accession>Q31XA8</accession>
<feature type="chain" id="PRO_0000237752" description="2-C-methyl-D-erythritol 2,4-cyclodiphosphate synthase">
    <location>
        <begin position="1"/>
        <end position="159"/>
    </location>
</feature>
<feature type="binding site" evidence="1">
    <location>
        <begin position="8"/>
        <end position="10"/>
    </location>
    <ligand>
        <name>4-CDP-2-C-methyl-D-erythritol 2-phosphate</name>
        <dbReference type="ChEBI" id="CHEBI:57919"/>
    </ligand>
</feature>
<feature type="binding site" evidence="1">
    <location>
        <position position="8"/>
    </location>
    <ligand>
        <name>a divalent metal cation</name>
        <dbReference type="ChEBI" id="CHEBI:60240"/>
    </ligand>
</feature>
<feature type="binding site" evidence="1">
    <location>
        <position position="10"/>
    </location>
    <ligand>
        <name>a divalent metal cation</name>
        <dbReference type="ChEBI" id="CHEBI:60240"/>
    </ligand>
</feature>
<feature type="binding site" evidence="1">
    <location>
        <begin position="34"/>
        <end position="35"/>
    </location>
    <ligand>
        <name>4-CDP-2-C-methyl-D-erythritol 2-phosphate</name>
        <dbReference type="ChEBI" id="CHEBI:57919"/>
    </ligand>
</feature>
<feature type="binding site" evidence="1">
    <location>
        <position position="42"/>
    </location>
    <ligand>
        <name>a divalent metal cation</name>
        <dbReference type="ChEBI" id="CHEBI:60240"/>
    </ligand>
</feature>
<feature type="binding site" evidence="1">
    <location>
        <begin position="56"/>
        <end position="58"/>
    </location>
    <ligand>
        <name>4-CDP-2-C-methyl-D-erythritol 2-phosphate</name>
        <dbReference type="ChEBI" id="CHEBI:57919"/>
    </ligand>
</feature>
<feature type="binding site" evidence="1">
    <location>
        <begin position="61"/>
        <end position="65"/>
    </location>
    <ligand>
        <name>4-CDP-2-C-methyl-D-erythritol 2-phosphate</name>
        <dbReference type="ChEBI" id="CHEBI:57919"/>
    </ligand>
</feature>
<feature type="binding site" evidence="1">
    <location>
        <begin position="100"/>
        <end position="106"/>
    </location>
    <ligand>
        <name>4-CDP-2-C-methyl-D-erythritol 2-phosphate</name>
        <dbReference type="ChEBI" id="CHEBI:57919"/>
    </ligand>
</feature>
<feature type="binding site" evidence="1">
    <location>
        <begin position="132"/>
        <end position="135"/>
    </location>
    <ligand>
        <name>4-CDP-2-C-methyl-D-erythritol 2-phosphate</name>
        <dbReference type="ChEBI" id="CHEBI:57919"/>
    </ligand>
</feature>
<feature type="binding site" evidence="1">
    <location>
        <position position="139"/>
    </location>
    <ligand>
        <name>4-CDP-2-C-methyl-D-erythritol 2-phosphate</name>
        <dbReference type="ChEBI" id="CHEBI:57919"/>
    </ligand>
</feature>
<feature type="binding site" evidence="1">
    <location>
        <position position="142"/>
    </location>
    <ligand>
        <name>4-CDP-2-C-methyl-D-erythritol 2-phosphate</name>
        <dbReference type="ChEBI" id="CHEBI:57919"/>
    </ligand>
</feature>
<feature type="site" description="Transition state stabilizer" evidence="1">
    <location>
        <position position="34"/>
    </location>
</feature>
<feature type="site" description="Transition state stabilizer" evidence="1">
    <location>
        <position position="133"/>
    </location>
</feature>
<protein>
    <recommendedName>
        <fullName evidence="1">2-C-methyl-D-erythritol 2,4-cyclodiphosphate synthase</fullName>
        <shortName evidence="1">MECDP-synthase</shortName>
        <shortName evidence="1">MECPP-synthase</shortName>
        <shortName evidence="1">MECPS</shortName>
        <ecNumber evidence="1">4.6.1.12</ecNumber>
    </recommendedName>
</protein>
<dbReference type="EC" id="4.6.1.12" evidence="1"/>
<dbReference type="EMBL" id="CP000036">
    <property type="protein sequence ID" value="ABB67300.1"/>
    <property type="molecule type" value="Genomic_DNA"/>
</dbReference>
<dbReference type="RefSeq" id="WP_001219242.1">
    <property type="nucleotide sequence ID" value="NC_007613.1"/>
</dbReference>
<dbReference type="SMR" id="Q31XA8"/>
<dbReference type="GeneID" id="93779260"/>
<dbReference type="KEGG" id="sbo:SBO_2774"/>
<dbReference type="HOGENOM" id="CLU_084630_2_0_6"/>
<dbReference type="UniPathway" id="UPA00056">
    <property type="reaction ID" value="UER00095"/>
</dbReference>
<dbReference type="Proteomes" id="UP000007067">
    <property type="component" value="Chromosome"/>
</dbReference>
<dbReference type="GO" id="GO:0008685">
    <property type="term" value="F:2-C-methyl-D-erythritol 2,4-cyclodiphosphate synthase activity"/>
    <property type="evidence" value="ECO:0007669"/>
    <property type="project" value="UniProtKB-UniRule"/>
</dbReference>
<dbReference type="GO" id="GO:0046872">
    <property type="term" value="F:metal ion binding"/>
    <property type="evidence" value="ECO:0007669"/>
    <property type="project" value="UniProtKB-KW"/>
</dbReference>
<dbReference type="GO" id="GO:0019288">
    <property type="term" value="P:isopentenyl diphosphate biosynthetic process, methylerythritol 4-phosphate pathway"/>
    <property type="evidence" value="ECO:0007669"/>
    <property type="project" value="UniProtKB-UniRule"/>
</dbReference>
<dbReference type="GO" id="GO:0016114">
    <property type="term" value="P:terpenoid biosynthetic process"/>
    <property type="evidence" value="ECO:0007669"/>
    <property type="project" value="InterPro"/>
</dbReference>
<dbReference type="CDD" id="cd00554">
    <property type="entry name" value="MECDP_synthase"/>
    <property type="match status" value="1"/>
</dbReference>
<dbReference type="FunFam" id="3.30.1330.50:FF:000001">
    <property type="entry name" value="2-C-methyl-D-erythritol 2,4-cyclodiphosphate synthase"/>
    <property type="match status" value="1"/>
</dbReference>
<dbReference type="Gene3D" id="3.30.1330.50">
    <property type="entry name" value="2-C-methyl-D-erythritol 2,4-cyclodiphosphate synthase"/>
    <property type="match status" value="1"/>
</dbReference>
<dbReference type="HAMAP" id="MF_00107">
    <property type="entry name" value="IspF"/>
    <property type="match status" value="1"/>
</dbReference>
<dbReference type="InterPro" id="IPR003526">
    <property type="entry name" value="MECDP_synthase"/>
</dbReference>
<dbReference type="InterPro" id="IPR020555">
    <property type="entry name" value="MECDP_synthase_CS"/>
</dbReference>
<dbReference type="InterPro" id="IPR036571">
    <property type="entry name" value="MECDP_synthase_sf"/>
</dbReference>
<dbReference type="NCBIfam" id="TIGR00151">
    <property type="entry name" value="ispF"/>
    <property type="match status" value="1"/>
</dbReference>
<dbReference type="PANTHER" id="PTHR43181">
    <property type="entry name" value="2-C-METHYL-D-ERYTHRITOL 2,4-CYCLODIPHOSPHATE SYNTHASE, CHLOROPLASTIC"/>
    <property type="match status" value="1"/>
</dbReference>
<dbReference type="PANTHER" id="PTHR43181:SF1">
    <property type="entry name" value="2-C-METHYL-D-ERYTHRITOL 2,4-CYCLODIPHOSPHATE SYNTHASE, CHLOROPLASTIC"/>
    <property type="match status" value="1"/>
</dbReference>
<dbReference type="Pfam" id="PF02542">
    <property type="entry name" value="YgbB"/>
    <property type="match status" value="1"/>
</dbReference>
<dbReference type="SUPFAM" id="SSF69765">
    <property type="entry name" value="IpsF-like"/>
    <property type="match status" value="1"/>
</dbReference>
<dbReference type="PROSITE" id="PS01350">
    <property type="entry name" value="ISPF"/>
    <property type="match status" value="1"/>
</dbReference>
<comment type="function">
    <text evidence="1">Involved in the biosynthesis of isopentenyl diphosphate (IPP) and dimethylallyl diphosphate (DMAPP), two major building blocks of isoprenoid compounds. Catalyzes the conversion of 4-diphosphocytidyl-2-C-methyl-D-erythritol 2-phosphate (CDP-ME2P) to 2-C-methyl-D-erythritol 2,4-cyclodiphosphate (ME-CPP) with a corresponding release of cytidine 5-monophosphate (CMP).</text>
</comment>
<comment type="catalytic activity">
    <reaction evidence="1">
        <text>4-CDP-2-C-methyl-D-erythritol 2-phosphate = 2-C-methyl-D-erythritol 2,4-cyclic diphosphate + CMP</text>
        <dbReference type="Rhea" id="RHEA:23864"/>
        <dbReference type="ChEBI" id="CHEBI:57919"/>
        <dbReference type="ChEBI" id="CHEBI:58483"/>
        <dbReference type="ChEBI" id="CHEBI:60377"/>
        <dbReference type="EC" id="4.6.1.12"/>
    </reaction>
</comment>
<comment type="cofactor">
    <cofactor evidence="1">
        <name>a divalent metal cation</name>
        <dbReference type="ChEBI" id="CHEBI:60240"/>
    </cofactor>
    <text evidence="1">Binds 1 divalent metal cation per subunit.</text>
</comment>
<comment type="pathway">
    <text evidence="1">Isoprenoid biosynthesis; isopentenyl diphosphate biosynthesis via DXP pathway; isopentenyl diphosphate from 1-deoxy-D-xylulose 5-phosphate: step 4/6.</text>
</comment>
<comment type="subunit">
    <text evidence="1">Homotrimer.</text>
</comment>
<comment type="similarity">
    <text evidence="1">Belongs to the IspF family.</text>
</comment>
<sequence length="159" mass="16898">MRIGHGFDVHAFGGEGPIIIGGVRIPYEKGLLAHSDGDVALHALTDALLGAAALGDIGKLFPDTDPAFKGADSRELLREAWRRIQAKGYTLGNVDVTIIAQAPKMLPHIPQMRVFIAEDLGCHMDDVNVKATTTEKLGFTGRGEGIACEAVALLIKATK</sequence>
<organism>
    <name type="scientific">Shigella boydii serotype 4 (strain Sb227)</name>
    <dbReference type="NCBI Taxonomy" id="300268"/>
    <lineage>
        <taxon>Bacteria</taxon>
        <taxon>Pseudomonadati</taxon>
        <taxon>Pseudomonadota</taxon>
        <taxon>Gammaproteobacteria</taxon>
        <taxon>Enterobacterales</taxon>
        <taxon>Enterobacteriaceae</taxon>
        <taxon>Shigella</taxon>
    </lineage>
</organism>